<evidence type="ECO:0000255" key="1">
    <source>
        <dbReference type="HAMAP-Rule" id="MF_00141"/>
    </source>
</evidence>
<organism>
    <name type="scientific">Baumannia cicadellinicola subsp. Homalodisca coagulata</name>
    <dbReference type="NCBI Taxonomy" id="374463"/>
    <lineage>
        <taxon>Bacteria</taxon>
        <taxon>Pseudomonadati</taxon>
        <taxon>Pseudomonadota</taxon>
        <taxon>Gammaproteobacteria</taxon>
        <taxon>Candidatus Palibaumannia</taxon>
    </lineage>
</organism>
<dbReference type="EMBL" id="CP000238">
    <property type="protein sequence ID" value="ABF13836.1"/>
    <property type="molecule type" value="Genomic_DNA"/>
</dbReference>
<dbReference type="RefSeq" id="WP_011520750.1">
    <property type="nucleotide sequence ID" value="NC_007984.1"/>
</dbReference>
<dbReference type="SMR" id="Q1LSP7"/>
<dbReference type="STRING" id="374463.BCI_0589"/>
<dbReference type="KEGG" id="bci:BCI_0589"/>
<dbReference type="HOGENOM" id="CLU_074944_0_0_6"/>
<dbReference type="OrthoDB" id="9801844at2"/>
<dbReference type="UniPathway" id="UPA00345"/>
<dbReference type="Proteomes" id="UP000002427">
    <property type="component" value="Chromosome"/>
</dbReference>
<dbReference type="GO" id="GO:0005737">
    <property type="term" value="C:cytoplasm"/>
    <property type="evidence" value="ECO:0007669"/>
    <property type="project" value="UniProtKB-SubCell"/>
</dbReference>
<dbReference type="GO" id="GO:0003746">
    <property type="term" value="F:translation elongation factor activity"/>
    <property type="evidence" value="ECO:0007669"/>
    <property type="project" value="UniProtKB-UniRule"/>
</dbReference>
<dbReference type="GO" id="GO:0043043">
    <property type="term" value="P:peptide biosynthetic process"/>
    <property type="evidence" value="ECO:0007669"/>
    <property type="project" value="InterPro"/>
</dbReference>
<dbReference type="CDD" id="cd04470">
    <property type="entry name" value="S1_EF-P_repeat_1"/>
    <property type="match status" value="1"/>
</dbReference>
<dbReference type="CDD" id="cd05794">
    <property type="entry name" value="S1_EF-P_repeat_2"/>
    <property type="match status" value="1"/>
</dbReference>
<dbReference type="FunFam" id="2.30.30.30:FF:000003">
    <property type="entry name" value="Elongation factor P"/>
    <property type="match status" value="1"/>
</dbReference>
<dbReference type="FunFam" id="2.40.50.140:FF:000004">
    <property type="entry name" value="Elongation factor P"/>
    <property type="match status" value="1"/>
</dbReference>
<dbReference type="FunFam" id="2.40.50.140:FF:000009">
    <property type="entry name" value="Elongation factor P"/>
    <property type="match status" value="1"/>
</dbReference>
<dbReference type="Gene3D" id="2.30.30.30">
    <property type="match status" value="1"/>
</dbReference>
<dbReference type="Gene3D" id="2.40.50.140">
    <property type="entry name" value="Nucleic acid-binding proteins"/>
    <property type="match status" value="2"/>
</dbReference>
<dbReference type="HAMAP" id="MF_00141">
    <property type="entry name" value="EF_P"/>
    <property type="match status" value="1"/>
</dbReference>
<dbReference type="InterPro" id="IPR015365">
    <property type="entry name" value="Elong-fact-P_C"/>
</dbReference>
<dbReference type="InterPro" id="IPR012340">
    <property type="entry name" value="NA-bd_OB-fold"/>
</dbReference>
<dbReference type="InterPro" id="IPR014722">
    <property type="entry name" value="Rib_uL2_dom2"/>
</dbReference>
<dbReference type="InterPro" id="IPR020599">
    <property type="entry name" value="Transl_elong_fac_P/YeiP"/>
</dbReference>
<dbReference type="InterPro" id="IPR013185">
    <property type="entry name" value="Transl_elong_KOW-like"/>
</dbReference>
<dbReference type="InterPro" id="IPR001059">
    <property type="entry name" value="Transl_elong_P/YeiP_cen"/>
</dbReference>
<dbReference type="InterPro" id="IPR013852">
    <property type="entry name" value="Transl_elong_P/YeiP_CS"/>
</dbReference>
<dbReference type="InterPro" id="IPR011768">
    <property type="entry name" value="Transl_elongation_fac_P"/>
</dbReference>
<dbReference type="InterPro" id="IPR008991">
    <property type="entry name" value="Translation_prot_SH3-like_sf"/>
</dbReference>
<dbReference type="NCBIfam" id="TIGR00038">
    <property type="entry name" value="efp"/>
    <property type="match status" value="1"/>
</dbReference>
<dbReference type="NCBIfam" id="NF001810">
    <property type="entry name" value="PRK00529.1"/>
    <property type="match status" value="1"/>
</dbReference>
<dbReference type="PANTHER" id="PTHR30053">
    <property type="entry name" value="ELONGATION FACTOR P"/>
    <property type="match status" value="1"/>
</dbReference>
<dbReference type="PANTHER" id="PTHR30053:SF12">
    <property type="entry name" value="ELONGATION FACTOR P (EF-P) FAMILY PROTEIN"/>
    <property type="match status" value="1"/>
</dbReference>
<dbReference type="Pfam" id="PF01132">
    <property type="entry name" value="EFP"/>
    <property type="match status" value="1"/>
</dbReference>
<dbReference type="Pfam" id="PF08207">
    <property type="entry name" value="EFP_N"/>
    <property type="match status" value="1"/>
</dbReference>
<dbReference type="Pfam" id="PF09285">
    <property type="entry name" value="Elong-fact-P_C"/>
    <property type="match status" value="1"/>
</dbReference>
<dbReference type="PIRSF" id="PIRSF005901">
    <property type="entry name" value="EF-P"/>
    <property type="match status" value="1"/>
</dbReference>
<dbReference type="SMART" id="SM01185">
    <property type="entry name" value="EFP"/>
    <property type="match status" value="1"/>
</dbReference>
<dbReference type="SMART" id="SM00841">
    <property type="entry name" value="Elong-fact-P_C"/>
    <property type="match status" value="1"/>
</dbReference>
<dbReference type="SUPFAM" id="SSF50249">
    <property type="entry name" value="Nucleic acid-binding proteins"/>
    <property type="match status" value="2"/>
</dbReference>
<dbReference type="SUPFAM" id="SSF50104">
    <property type="entry name" value="Translation proteins SH3-like domain"/>
    <property type="match status" value="1"/>
</dbReference>
<dbReference type="PROSITE" id="PS01275">
    <property type="entry name" value="EFP"/>
    <property type="match status" value="1"/>
</dbReference>
<sequence>MHFYRTNEFRVGLKIMLNGEPYAIIENEFVKPGKGQPFNRVRLRQLLSGKKIIEKIFKSGDAVEAADIIDRHLNYLYNNGEFWYFINNQNYELVAADAKAVGDYAKWLVKQTPCVLTLWKDQPIAVVPPNFVELEVLSTDPGIKGDAISSIYKPATLTTGVIVKVPLFINKGEIIKVDTRTSMYISRVK</sequence>
<reference key="1">
    <citation type="journal article" date="2006" name="PLoS Biol.">
        <title>Metabolic complementarity and genomics of the dual bacterial symbiosis of sharpshooters.</title>
        <authorList>
            <person name="Wu D."/>
            <person name="Daugherty S.C."/>
            <person name="Van Aken S.E."/>
            <person name="Pai G.H."/>
            <person name="Watkins K.L."/>
            <person name="Khouri H."/>
            <person name="Tallon L.J."/>
            <person name="Zaborsky J.M."/>
            <person name="Dunbar H.E."/>
            <person name="Tran P.L."/>
            <person name="Moran N.A."/>
            <person name="Eisen J.A."/>
        </authorList>
    </citation>
    <scope>NUCLEOTIDE SEQUENCE [LARGE SCALE GENOMIC DNA]</scope>
</reference>
<keyword id="KW-0963">Cytoplasm</keyword>
<keyword id="KW-0251">Elongation factor</keyword>
<keyword id="KW-0379">Hydroxylation</keyword>
<keyword id="KW-0648">Protein biosynthesis</keyword>
<keyword id="KW-1185">Reference proteome</keyword>
<name>EFP_BAUCH</name>
<accession>Q1LSP7</accession>
<proteinExistence type="inferred from homology"/>
<comment type="function">
    <text evidence="1">Involved in peptide bond synthesis. Alleviates ribosome stalling that occurs when 3 or more consecutive Pro residues or the sequence PPG is present in a protein, possibly by augmenting the peptidyl transferase activity of the ribosome. Modification of Lys-34 is required for alleviation.</text>
</comment>
<comment type="pathway">
    <text evidence="1">Protein biosynthesis; polypeptide chain elongation.</text>
</comment>
<comment type="subcellular location">
    <subcellularLocation>
        <location evidence="1">Cytoplasm</location>
    </subcellularLocation>
</comment>
<comment type="PTM">
    <text evidence="1">May be beta-lysylated on the epsilon-amino group of Lys-34 by the combined action of EpmA and EpmB, and then hydroxylated on the C5 position of the same residue by EpmC (if this protein is present). Lysylation is critical for the stimulatory effect of EF-P on peptide-bond formation. The lysylation moiety may extend toward the peptidyltransferase center and stabilize the terminal 3-CCA end of the tRNA. Hydroxylation of the C5 position on Lys-34 may allow additional potential stabilizing hydrogen-bond interactions with the P-tRNA.</text>
</comment>
<comment type="similarity">
    <text evidence="1">Belongs to the elongation factor P family.</text>
</comment>
<feature type="chain" id="PRO_1000010687" description="Elongation factor P">
    <location>
        <begin position="1"/>
        <end position="189"/>
    </location>
</feature>
<feature type="modified residue" description="N6-(3,6-diaminohexanoyl)-5-hydroxylysine" evidence="1">
    <location>
        <position position="34"/>
    </location>
</feature>
<gene>
    <name evidence="1" type="primary">efp</name>
    <name type="ordered locus">BCI_0589</name>
</gene>
<protein>
    <recommendedName>
        <fullName evidence="1">Elongation factor P</fullName>
        <shortName evidence="1">EF-P</shortName>
    </recommendedName>
</protein>